<sequence>MVKIGSDTLAPKQLVLENKYIAACLSKPANFALSFLAQGASLKPSVVARAAINGVIACDTTTFQLLAMDGTPLSFAAAAVVVRQFQLAHNRFVKIGLRQFYKECTRRCNAFNLQKAARQSRERRAACKRILASLDADLPCSRSSRRAIVTAHYAGVATAARKSALFRQMRADKRASRALAAAMQPLVLAPPTCARIPYVCPLSSSVEESVSRRSLERCSKRVPREHASPRVASEMQPFADRPRLFSRVLLLPLSEITRAFFSRVFVPGSAMYDCATDLAHVVLDWWSITPMAHYLAMLDNFLGTPTEESVRQASTNLLEEVEAMRALCRDHRANGVFAWVTETAGTIGSTLKTAAVAPFHGAGVALKAVLTPCASATLAWGEKFFQTLKSKFFEFLKPYIQHAIYASAEIEKYWAFIHGWATKMWNNVGVELQALGDAAWWAIGITMVCGIVTLVEKLLVYLGALNAGGILCSLMLTGLLGAAGLLATGKFAEASSTLVGAMRSLIFTLFGSWKPTEASDGLTCNANALDFPLKVLETVGTGLISAPLGTLQYIGKYGQAMDQIRKGKDAIKEFVGFCMDRVADAWDYMTGRKDSFLREIASAAKVDIVYWIKQTQSVLLQAQTIAVTDIVLLDTVTHLLYKGQILQLTLAKASRTTSLDYARIVSTLIGELTKIRATCARAGSFDGRRPEPFWCYIYGKSHCGKSLFMEDVSRALLKENGHAPNDIYAKNARDSFWSGYLQHACVQVDDLSACVTRPSLESEFLQLVGSKMYSLNMAAVEDKGMSFNSSIIVTTANVYTAPTSAEITDKDAYGNRRNVVVQCRAAPDVEFDPRNPSASCEARLVHRTDESPLGNGQWRNCSAVLEDIIHHAAIHRNKENLLMENYRERSDTQHPVFVGAKSFIHRLAKEKNFAHIVCDDVLYYHDSYIDSTRVSEGTINIGMEDACIQSVVQWSELVGGVKDLGLLYAFVHAFTEGPCHVDSVEALNSEATSCQRDFFQSLSLLERIYMRLVQKQLDRIRANPDFLFSVDIKTRILQSFRHGYDEMITHGGKVLAIFAALLLVLLLYSSFFALYQTFVAGTSSALVSAGMITQLSANAGSVCTSASNPSGAASYVSSNIPIHHRWRSNYSERSYALNSNLEDKYLLDLLVWLQIPGDSIISCIRFKGRSLLLTKHQALAIPEGARVYCNYYGRGRAVQTIPLSWSYKKVREFADTEAVLFLDAQLSTMPAGREHYFNVPVERLPSVFDMNGVVMKQKRYMTDSDDSLAAFTPNQPVVNTWENSRAKLNCERQGINTFAYGGNYRNELPRSISSNCNTSPEDCGAIMTMIFEGRRVVVGMHVASGKNPQGRYMSTACLLPDYHEDLSLNSMLQYTPYDGICKEGYRQIGNIENIGARPYTSGKTAFVAVPQHLLYSPPVLQEKLPGSAQPVTIQVEVKQPAILSKDDPRIPEGTSYDPLIDGMAKFSHPMAVLDENVCNEVAQDIVESWHDCFQDLQDVSDEIAINGSTEMDYEPFNLQSSEGYPYVTQRKPGESGKIRFFEMDPYTGLKSLIPNTLPAMRYEALQRDCFTSVPEMVCIETPKDECLPLRKICIKPKTRLFSILPLEFNLLLRKKFLHFSSSLQMHRDTLPTQVGVNPYSREWGELLQRLRAQSSVAINCDYASFDGLLTGQILEKIGTMINKMYIGSEASKIQRLNLLMSIVNRKSICGARVYEVRAGIPSGCALTVLLNSIFNEFLIRFVWRTTIIGVPRERFSQYVTLLIYGDDNLIAVHPDYLPHFNGEIIRTRLADVNVIITDGSDKTAEKIEEKPLVQLDFLKRRFRKLNDGTVYAPLDLASVYTSLQNVTMGAGSIHIALQNNVHNALLELYLHGNETWFNHLRDFYRKSHAWVNLPSWREAFAFHQGQISGVTPWTPYQMFDVPVDGGRLRAMMANQGEAAFSTHLGREIYICGPKWCVSDPEHQFVVSTTPLRSADRGSGIHRAIEYPCNGVGRLPSQDWVTKFKSSAHRVTAEIRKAHASGKAIYFRDDPPYVANWCAAIGFAQGLGYDYKSMINLYHDVSVPGSDALYFYFEQRARRALPEPYIPPHLRTRVR</sequence>
<reference key="1">
    <citation type="journal article" date="2001" name="Virus Res.">
        <title>Nucleotide sequence of black currant reversion associated nepovirus RNA1.</title>
        <authorList>
            <person name="Pacot-Hiriart C."/>
            <person name="Latvala-Kilby S."/>
            <person name="Lehto K."/>
        </authorList>
    </citation>
    <scope>NUCLEOTIDE SEQUENCE [GENOMIC RNA]</scope>
</reference>
<keyword id="KW-0067">ATP-binding</keyword>
<keyword id="KW-0191">Covalent protein-RNA linkage</keyword>
<keyword id="KW-0325">Glycoprotein</keyword>
<keyword id="KW-0347">Helicase</keyword>
<keyword id="KW-1038">Host endoplasmic reticulum</keyword>
<keyword id="KW-1043">Host membrane</keyword>
<keyword id="KW-0378">Hydrolase</keyword>
<keyword id="KW-0472">Membrane</keyword>
<keyword id="KW-0547">Nucleotide-binding</keyword>
<keyword id="KW-0548">Nucleotidyltransferase</keyword>
<keyword id="KW-0645">Protease</keyword>
<keyword id="KW-0694">RNA-binding</keyword>
<keyword id="KW-0696">RNA-directed RNA polymerase</keyword>
<keyword id="KW-0788">Thiol protease</keyword>
<keyword id="KW-0808">Transferase</keyword>
<keyword id="KW-0812">Transmembrane</keyword>
<keyword id="KW-1133">Transmembrane helix</keyword>
<keyword id="KW-0693">Viral RNA replication</keyword>
<organism>
    <name type="scientific">Blackcurrant reversion association virus</name>
    <name type="common">BRAV</name>
    <dbReference type="NCBI Taxonomy" id="65743"/>
    <lineage>
        <taxon>Viruses</taxon>
        <taxon>Riboviria</taxon>
        <taxon>Orthornavirae</taxon>
        <taxon>Pisuviricota</taxon>
        <taxon>Pisoniviricetes</taxon>
        <taxon>Picornavirales</taxon>
        <taxon>Secoviridae</taxon>
        <taxon>Comovirinae</taxon>
        <taxon>Nepovirus</taxon>
        <taxon>Nepovirus ribis</taxon>
    </lineage>
</organism>
<proteinExistence type="inferred from homology"/>
<evidence type="ECO:0000250" key="1"/>
<evidence type="ECO:0000255" key="2"/>
<evidence type="ECO:0000255" key="3">
    <source>
        <dbReference type="PROSITE-ProRule" id="PRU00539"/>
    </source>
</evidence>
<evidence type="ECO:0000255" key="4">
    <source>
        <dbReference type="PROSITE-ProRule" id="PRU00551"/>
    </source>
</evidence>
<evidence type="ECO:0000255" key="5">
    <source>
        <dbReference type="PROSITE-ProRule" id="PRU01222"/>
    </source>
</evidence>
<evidence type="ECO:0000305" key="6"/>
<comment type="function">
    <text evidence="1">Picornain 3C-like protease is a thiol protease that cleaves at Gln-|-Gly or Gln-|-Ser sites in the P1 and P2 polyproteins.</text>
</comment>
<comment type="function">
    <text evidence="1">The VPg-NTB polyprotein may act as a membrane-anchor for the replication complex.</text>
</comment>
<comment type="catalytic activity">
    <reaction evidence="3">
        <text>RNA(n) + a ribonucleoside 5'-triphosphate = RNA(n+1) + diphosphate</text>
        <dbReference type="Rhea" id="RHEA:21248"/>
        <dbReference type="Rhea" id="RHEA-COMP:14527"/>
        <dbReference type="Rhea" id="RHEA-COMP:17342"/>
        <dbReference type="ChEBI" id="CHEBI:33019"/>
        <dbReference type="ChEBI" id="CHEBI:61557"/>
        <dbReference type="ChEBI" id="CHEBI:140395"/>
        <dbReference type="EC" id="2.7.7.48"/>
    </reaction>
</comment>
<comment type="subcellular location">
    <molecule>Viral genome-linked protein</molecule>
    <subcellularLocation>
        <location evidence="1">Host endoplasmic reticulum lumen</location>
    </subcellularLocation>
</comment>
<comment type="subcellular location">
    <molecule>Putative ATP-dependent helicase</molecule>
    <subcellularLocation>
        <location evidence="1">Host endoplasmic reticulum membrane</location>
        <topology evidence="1">Single-pass membrane protein</topology>
    </subcellularLocation>
    <text evidence="1">The NTB-VPg polyprotein is associated with endoplasmic-derived membranes that are active in viral replication.</text>
</comment>
<comment type="PTM">
    <text evidence="1">Specific enzymatic cleavages by picornain 3C-like protease in vivo yield mature proteins. Picornain 3C-like protease is autocatalytically processed. NTB exists as NTB-VPg polyprotein as well as NTB mature protein (By similarity).</text>
</comment>
<comment type="PTM">
    <text evidence="1">VPg is uridylylated by the polymerase and is covalently linked to the 5'-end of genomic RNA. This uridylylated form acts as a nucleotide-peptide primer for the polymerase (By similarity).</text>
</comment>
<comment type="similarity">
    <text evidence="6">Belongs to the nepoviruses RNA1 polyprotein family.</text>
</comment>
<name>POL1_BRAV</name>
<protein>
    <recommendedName>
        <fullName>RNA1 polyprotein</fullName>
    </recommendedName>
    <alternativeName>
        <fullName>P1</fullName>
    </alternativeName>
    <component>
        <recommendedName>
            <fullName>Protein X1</fullName>
        </recommendedName>
    </component>
    <component>
        <recommendedName>
            <fullName>Protein X2</fullName>
        </recommendedName>
    </component>
    <component>
        <recommendedName>
            <fullName>Putative ATP-dependent helicase</fullName>
            <ecNumber>3.6.4.-</ecNumber>
        </recommendedName>
        <alternativeName>
            <fullName>Membrane-binding protein</fullName>
        </alternativeName>
        <alternativeName>
            <fullName>NTP-binding protein</fullName>
            <shortName>NTB</shortName>
        </alternativeName>
    </component>
    <component>
        <recommendedName>
            <fullName>Viral genome-linked protein</fullName>
        </recommendedName>
        <alternativeName>
            <fullName>VPg</fullName>
        </alternativeName>
    </component>
    <component>
        <recommendedName>
            <fullName>Picornain 3C-like protease</fullName>
            <shortName>3C-like protease</shortName>
            <shortName>PRO</shortName>
            <ecNumber>3.4.22.-</ecNumber>
        </recommendedName>
    </component>
    <component>
        <recommendedName>
            <fullName>RNA-directed RNA polymerase</fullName>
            <shortName>POL</shortName>
            <ecNumber>2.7.7.48</ecNumber>
        </recommendedName>
    </component>
</protein>
<accession>Q8V5E0</accession>
<feature type="chain" id="PRO_0000037080" description="Protein X1" evidence="1">
    <location>
        <begin position="1"/>
        <end position="336"/>
    </location>
</feature>
<feature type="chain" id="PRO_0000037081" description="Protein X2" evidence="1">
    <location>
        <begin position="337"/>
        <end position="523"/>
    </location>
</feature>
<feature type="chain" id="PRO_0000037082" description="Putative ATP-dependent helicase" evidence="1">
    <location>
        <begin position="524"/>
        <end position="1105"/>
    </location>
</feature>
<feature type="chain" id="PRO_0000037083" description="Viral genome-linked protein" evidence="1">
    <location>
        <begin position="1106"/>
        <end position="1132"/>
    </location>
</feature>
<feature type="chain" id="PRO_0000037084" description="Picornain 3C-like protease" evidence="1">
    <location>
        <begin position="1133"/>
        <end position="1369"/>
    </location>
</feature>
<feature type="chain" id="PRO_0000037085" description="RNA-directed RNA polymerase" evidence="1">
    <location>
        <begin position="1370"/>
        <end position="2094"/>
    </location>
</feature>
<feature type="topological domain" description="Cytoplasmic" evidence="2">
    <location>
        <begin position="524"/>
        <end position="1053"/>
    </location>
</feature>
<feature type="transmembrane region" description="Helical" evidence="2">
    <location>
        <begin position="1054"/>
        <end position="1074"/>
    </location>
</feature>
<feature type="topological domain" description="Lumenal" evidence="2">
    <location>
        <begin position="1075"/>
        <end position="1105"/>
    </location>
</feature>
<feature type="domain" description="SF3 helicase" evidence="4">
    <location>
        <begin position="672"/>
        <end position="838"/>
    </location>
</feature>
<feature type="domain" description="Peptidase C3" evidence="5">
    <location>
        <begin position="1136"/>
        <end position="1366"/>
    </location>
</feature>
<feature type="domain" description="RdRp catalytic" evidence="3">
    <location>
        <begin position="1655"/>
        <end position="1780"/>
    </location>
</feature>
<feature type="active site" description="For picornain 3C-like protease activity" evidence="5">
    <location>
        <position position="1176"/>
    </location>
</feature>
<feature type="active site" description="For picornain 3C-like protease activity" evidence="5">
    <location>
        <position position="1217"/>
    </location>
</feature>
<feature type="active site" description="For picornain 3C-like protease activity" evidence="5">
    <location>
        <position position="1323"/>
    </location>
</feature>
<feature type="binding site" evidence="4">
    <location>
        <begin position="699"/>
        <end position="706"/>
    </location>
    <ligand>
        <name>ATP</name>
        <dbReference type="ChEBI" id="CHEBI:30616"/>
    </ligand>
</feature>
<feature type="site" description="Involved in the cleavage site specificity" evidence="1">
    <location>
        <position position="1341"/>
    </location>
</feature>
<feature type="glycosylation site" description="N-linked (GlcNAc...) asparagine; by host" evidence="1">
    <location>
        <position position="1129"/>
    </location>
</feature>
<organismHost>
    <name type="scientific">Ribes nigrum</name>
    <name type="common">European black currant</name>
    <dbReference type="NCBI Taxonomy" id="78511"/>
</organismHost>
<dbReference type="EC" id="3.6.4.-"/>
<dbReference type="EC" id="3.4.22.-"/>
<dbReference type="EC" id="2.7.7.48"/>
<dbReference type="EMBL" id="AF368272">
    <property type="protein sequence ID" value="AAL36026.1"/>
    <property type="molecule type" value="Genomic_RNA"/>
</dbReference>
<dbReference type="RefSeq" id="NP_612604.1">
    <property type="nucleotide sequence ID" value="NC_003509.1"/>
</dbReference>
<dbReference type="SMR" id="Q8V5E0"/>
<dbReference type="GeneID" id="993416"/>
<dbReference type="KEGG" id="vg:993416"/>
<dbReference type="Proteomes" id="UP000007614">
    <property type="component" value="Genome"/>
</dbReference>
<dbReference type="GO" id="GO:0044166">
    <property type="term" value="C:host cell endoplasmic reticulum lumen"/>
    <property type="evidence" value="ECO:0007669"/>
    <property type="project" value="UniProtKB-SubCell"/>
</dbReference>
<dbReference type="GO" id="GO:0044167">
    <property type="term" value="C:host cell endoplasmic reticulum membrane"/>
    <property type="evidence" value="ECO:0007669"/>
    <property type="project" value="UniProtKB-SubCell"/>
</dbReference>
<dbReference type="GO" id="GO:0016020">
    <property type="term" value="C:membrane"/>
    <property type="evidence" value="ECO:0007669"/>
    <property type="project" value="UniProtKB-KW"/>
</dbReference>
<dbReference type="GO" id="GO:0005524">
    <property type="term" value="F:ATP binding"/>
    <property type="evidence" value="ECO:0007669"/>
    <property type="project" value="UniProtKB-KW"/>
</dbReference>
<dbReference type="GO" id="GO:0004197">
    <property type="term" value="F:cysteine-type endopeptidase activity"/>
    <property type="evidence" value="ECO:0007669"/>
    <property type="project" value="InterPro"/>
</dbReference>
<dbReference type="GO" id="GO:0003723">
    <property type="term" value="F:RNA binding"/>
    <property type="evidence" value="ECO:0007669"/>
    <property type="project" value="UniProtKB-KW"/>
</dbReference>
<dbReference type="GO" id="GO:0003724">
    <property type="term" value="F:RNA helicase activity"/>
    <property type="evidence" value="ECO:0007669"/>
    <property type="project" value="InterPro"/>
</dbReference>
<dbReference type="GO" id="GO:0003968">
    <property type="term" value="F:RNA-directed RNA polymerase activity"/>
    <property type="evidence" value="ECO:0007669"/>
    <property type="project" value="UniProtKB-KW"/>
</dbReference>
<dbReference type="GO" id="GO:0006351">
    <property type="term" value="P:DNA-templated transcription"/>
    <property type="evidence" value="ECO:0007669"/>
    <property type="project" value="InterPro"/>
</dbReference>
<dbReference type="GO" id="GO:0006508">
    <property type="term" value="P:proteolysis"/>
    <property type="evidence" value="ECO:0007669"/>
    <property type="project" value="UniProtKB-KW"/>
</dbReference>
<dbReference type="GO" id="GO:0039694">
    <property type="term" value="P:viral RNA genome replication"/>
    <property type="evidence" value="ECO:0007669"/>
    <property type="project" value="InterPro"/>
</dbReference>
<dbReference type="Gene3D" id="3.30.70.270">
    <property type="match status" value="1"/>
</dbReference>
<dbReference type="InterPro" id="IPR043502">
    <property type="entry name" value="DNA/RNA_pol_sf"/>
</dbReference>
<dbReference type="InterPro" id="IPR000605">
    <property type="entry name" value="Helicase_SF3_ssDNA/RNA_vir"/>
</dbReference>
<dbReference type="InterPro" id="IPR014759">
    <property type="entry name" value="Helicase_SF3_ssRNA_vir"/>
</dbReference>
<dbReference type="InterPro" id="IPR044067">
    <property type="entry name" value="PCV_3C_PRO"/>
</dbReference>
<dbReference type="InterPro" id="IPR043128">
    <property type="entry name" value="Rev_trsase/Diguanyl_cyclase"/>
</dbReference>
<dbReference type="InterPro" id="IPR001205">
    <property type="entry name" value="RNA-dir_pol_C"/>
</dbReference>
<dbReference type="InterPro" id="IPR007094">
    <property type="entry name" value="RNA-dir_pol_PSvirus"/>
</dbReference>
<dbReference type="Pfam" id="PF00680">
    <property type="entry name" value="RdRP_1"/>
    <property type="match status" value="1"/>
</dbReference>
<dbReference type="Pfam" id="PF00910">
    <property type="entry name" value="RNA_helicase"/>
    <property type="match status" value="1"/>
</dbReference>
<dbReference type="SUPFAM" id="SSF56672">
    <property type="entry name" value="DNA/RNA polymerases"/>
    <property type="match status" value="1"/>
</dbReference>
<dbReference type="PROSITE" id="PS51874">
    <property type="entry name" value="PCV_3C_PRO"/>
    <property type="match status" value="1"/>
</dbReference>
<dbReference type="PROSITE" id="PS50507">
    <property type="entry name" value="RDRP_SSRNA_POS"/>
    <property type="match status" value="1"/>
</dbReference>
<dbReference type="PROSITE" id="PS51218">
    <property type="entry name" value="SF3_HELICASE_2"/>
    <property type="match status" value="1"/>
</dbReference>